<proteinExistence type="inferred from homology"/>
<name>RNTF_MYCTO</name>
<gene>
    <name type="ordered locus">MT3038</name>
</gene>
<feature type="chain" id="PRO_0000427209" description="PGL/p-HBAD biosynthesis rhamnosyltransferase">
    <location>
        <begin position="1"/>
        <end position="449"/>
    </location>
</feature>
<keyword id="KW-0328">Glycosyltransferase</keyword>
<keyword id="KW-1185">Reference proteome</keyword>
<keyword id="KW-0808">Transferase</keyword>
<evidence type="ECO:0000250" key="1"/>
<evidence type="ECO:0000305" key="2"/>
<accession>P9WN08</accession>
<accession>L0TBE0</accession>
<accession>P95130</accession>
<accession>Q50455</accession>
<accession>Q50456</accession>
<accession>Q7D6C8</accession>
<comment type="function">
    <text evidence="1">Catalyzes the transfer of the first rhamnosyl residue on p-hydroxybenzoic acid or phenolphthiocerol derivatives to form, after O-methylation at position 2 of the sugar unit, mono-O-methyl-glycosyl-p-hydroxybenzoic acid derivative (p-HBAD I) and 2-O-methyl-rhamnosyl-phenolphthiocerol dimycocerosate (also called mycoside B) during p-hydroxybenzoic acid derivatives (p-HBAD) and glycosylated phenolphthiocerol dimycocerosates (PGL) biosynthesis.</text>
</comment>
<comment type="similarity">
    <text evidence="2">Belongs to the glycosyltransferase 28 family.</text>
</comment>
<protein>
    <recommendedName>
        <fullName>PGL/p-HBAD biosynthesis rhamnosyltransferase</fullName>
        <ecNumber>2.4.1.-</ecNumber>
    </recommendedName>
</protein>
<reference key="1">
    <citation type="journal article" date="2002" name="J. Bacteriol.">
        <title>Whole-genome comparison of Mycobacterium tuberculosis clinical and laboratory strains.</title>
        <authorList>
            <person name="Fleischmann R.D."/>
            <person name="Alland D."/>
            <person name="Eisen J.A."/>
            <person name="Carpenter L."/>
            <person name="White O."/>
            <person name="Peterson J.D."/>
            <person name="DeBoy R.T."/>
            <person name="Dodson R.J."/>
            <person name="Gwinn M.L."/>
            <person name="Haft D.H."/>
            <person name="Hickey E.K."/>
            <person name="Kolonay J.F."/>
            <person name="Nelson W.C."/>
            <person name="Umayam L.A."/>
            <person name="Ermolaeva M.D."/>
            <person name="Salzberg S.L."/>
            <person name="Delcher A."/>
            <person name="Utterback T.R."/>
            <person name="Weidman J.F."/>
            <person name="Khouri H.M."/>
            <person name="Gill J."/>
            <person name="Mikula A."/>
            <person name="Bishai W."/>
            <person name="Jacobs W.R. Jr."/>
            <person name="Venter J.C."/>
            <person name="Fraser C.M."/>
        </authorList>
    </citation>
    <scope>NUCLEOTIDE SEQUENCE [LARGE SCALE GENOMIC DNA]</scope>
    <source>
        <strain>CDC 1551 / Oshkosh</strain>
    </source>
</reference>
<dbReference type="EC" id="2.4.1.-"/>
<dbReference type="EMBL" id="AE000516">
    <property type="protein sequence ID" value="AAK47364.1"/>
    <property type="molecule type" value="Genomic_DNA"/>
</dbReference>
<dbReference type="PIR" id="G70670">
    <property type="entry name" value="G70670"/>
</dbReference>
<dbReference type="RefSeq" id="WP_003414922.1">
    <property type="nucleotide sequence ID" value="NZ_KK341227.1"/>
</dbReference>
<dbReference type="SMR" id="P9WN08"/>
<dbReference type="CAZy" id="GT1">
    <property type="family name" value="Glycosyltransferase Family 1"/>
</dbReference>
<dbReference type="KEGG" id="mtc:MT3038"/>
<dbReference type="PATRIC" id="fig|83331.31.peg.3279"/>
<dbReference type="HOGENOM" id="CLU_692271_0_0_11"/>
<dbReference type="Proteomes" id="UP000001020">
    <property type="component" value="Chromosome"/>
</dbReference>
<dbReference type="GO" id="GO:0016758">
    <property type="term" value="F:hexosyltransferase activity"/>
    <property type="evidence" value="ECO:0007669"/>
    <property type="project" value="UniProtKB-ARBA"/>
</dbReference>
<dbReference type="GO" id="GO:0008194">
    <property type="term" value="F:UDP-glycosyltransferase activity"/>
    <property type="evidence" value="ECO:0007669"/>
    <property type="project" value="InterPro"/>
</dbReference>
<dbReference type="GO" id="GO:0009058">
    <property type="term" value="P:biosynthetic process"/>
    <property type="evidence" value="ECO:0007669"/>
    <property type="project" value="UniProtKB-ARBA"/>
</dbReference>
<dbReference type="CDD" id="cd03784">
    <property type="entry name" value="GT1_Gtf-like"/>
    <property type="match status" value="1"/>
</dbReference>
<dbReference type="FunFam" id="3.40.50.2000:FF:000072">
    <property type="entry name" value="Glycosyl transferase"/>
    <property type="match status" value="1"/>
</dbReference>
<dbReference type="FunFam" id="3.40.50.2000:FF:000233">
    <property type="entry name" value="PGL/p-HBAD biosynthesis rhamnosyltransferase"/>
    <property type="match status" value="1"/>
</dbReference>
<dbReference type="Gene3D" id="3.40.50.2000">
    <property type="entry name" value="Glycogen Phosphorylase B"/>
    <property type="match status" value="2"/>
</dbReference>
<dbReference type="InterPro" id="IPR010610">
    <property type="entry name" value="EryCIII-like_C"/>
</dbReference>
<dbReference type="InterPro" id="IPR002213">
    <property type="entry name" value="UDP_glucos_trans"/>
</dbReference>
<dbReference type="PANTHER" id="PTHR21015:SF22">
    <property type="entry name" value="GLYCOSYLTRANSFERASE"/>
    <property type="match status" value="1"/>
</dbReference>
<dbReference type="PANTHER" id="PTHR21015">
    <property type="entry name" value="UDP-N-ACETYLGLUCOSAMINE--N-ACETYLMURAMYL-(PENTAPEPTIDE) PYROPHOSPHORYL-UNDECAPRENOL N-ACETYLGLUCOSAMINE TRANSFERASE 1"/>
    <property type="match status" value="1"/>
</dbReference>
<dbReference type="Pfam" id="PF06722">
    <property type="entry name" value="EryCIII-like_C"/>
    <property type="match status" value="1"/>
</dbReference>
<dbReference type="SUPFAM" id="SSF53756">
    <property type="entry name" value="UDP-Glycosyltransferase/glycogen phosphorylase"/>
    <property type="match status" value="1"/>
</dbReference>
<organism>
    <name type="scientific">Mycobacterium tuberculosis (strain CDC 1551 / Oshkosh)</name>
    <dbReference type="NCBI Taxonomy" id="83331"/>
    <lineage>
        <taxon>Bacteria</taxon>
        <taxon>Bacillati</taxon>
        <taxon>Actinomycetota</taxon>
        <taxon>Actinomycetes</taxon>
        <taxon>Mycobacteriales</taxon>
        <taxon>Mycobacteriaceae</taxon>
        <taxon>Mycobacterium</taxon>
        <taxon>Mycobacterium tuberculosis complex</taxon>
    </lineage>
</organism>
<sequence>MRVSCVYATASRWGGPPVASEVRGDAAISTTPDAAPGLAARRRRILFVAEAVTLAHVVRPFALAQSLDPSRYEVHFACDPRYNQLLGPLPFRHHAIHTIPSERFFGNLTQGRFYAMRTLRKYVEADLRVLDEIAPDLVVGDLRISLSVSARLAGIPYIAIANAYWSPYAQRRFPLPDVIWTRLFGVRLVKLLYRLERPLLFALQCMPLNWVRRRHGLSSLGWNLCRIFTDGDHTLYADVPELMPTYDLPANHEYLGPVLWSPAGKPPTWWDSLPTDRPIVYATLGTSGGRNLLQLVLNALAELPVTVIAATAGRSDLKTVPANAFVADYLPGEAAAARSAVVVCNGGSLTTQQALVAGVPVIGVAGNLDQHLNMEAVERAGAGVLLRTERLKSQRVAGAVMQVISRSEYRQAAARLADAFGRDRVGFPQHVENALRLMPENRPRTWLAS</sequence>